<keyword id="KW-0997">Cell inner membrane</keyword>
<keyword id="KW-1003">Cell membrane</keyword>
<keyword id="KW-0472">Membrane</keyword>
<keyword id="KW-1185">Reference proteome</keyword>
<keyword id="KW-0812">Transmembrane</keyword>
<keyword id="KW-1133">Transmembrane helix</keyword>
<keyword id="KW-0813">Transport</keyword>
<evidence type="ECO:0000250" key="1">
    <source>
        <dbReference type="UniProtKB" id="B2HSU8"/>
    </source>
</evidence>
<evidence type="ECO:0000250" key="2">
    <source>
        <dbReference type="UniProtKB" id="P9WJE5"/>
    </source>
</evidence>
<evidence type="ECO:0000255" key="3"/>
<evidence type="ECO:0000305" key="4"/>
<feature type="chain" id="PRO_0000427844" description="ESX-3 secretion system protein EccE3">
    <location>
        <begin position="1"/>
        <end position="331"/>
    </location>
</feature>
<feature type="transmembrane region" description="Helical" evidence="3">
    <location>
        <begin position="11"/>
        <end position="31"/>
    </location>
</feature>
<feature type="transmembrane region" description="Helical" evidence="3">
    <location>
        <begin position="37"/>
        <end position="57"/>
    </location>
</feature>
<sequence>MNPIPSWPGRGRVTLVLLAVVPVALAYPWQSTRDYVLLGVAAAVVIGLFGFWRGLYFTTIARRGLAILRRRRRIAEPATCTRTTVLVWVGPPASDTNVLPLTLIARYLDRYGIRADTIRITSRVTASGDCRTWVGLTVVADDNLAALQARSARIPLQETAQVAARRLADHLREIGWEAGTAAPDEIPALVAADSRETWRGMRHTDSDYVAAYRVSADAELPDTLPAIRSRPAQETWIALEIAYAAGSSTRYTVAAACALRTDWRPGGTAPVAGLLPQHGNHVPALTALDPRSTRRLDGHTDAPADLLTRLHWPTPTAGAHRAPLTNAVSRT</sequence>
<name>ECCE3_MYCTO</name>
<dbReference type="EMBL" id="AE000516">
    <property type="protein sequence ID" value="AAK44529.1"/>
    <property type="molecule type" value="Genomic_DNA"/>
</dbReference>
<dbReference type="PIR" id="B70837">
    <property type="entry name" value="B70837"/>
</dbReference>
<dbReference type="RefSeq" id="WP_003401533.1">
    <property type="nucleotide sequence ID" value="NZ_KK341227.1"/>
</dbReference>
<dbReference type="SMR" id="P9WJE4"/>
<dbReference type="GeneID" id="45424266"/>
<dbReference type="KEGG" id="mtc:MT0305"/>
<dbReference type="PATRIC" id="fig|83331.31.peg.328"/>
<dbReference type="HOGENOM" id="CLU_079041_0_0_11"/>
<dbReference type="Proteomes" id="UP000001020">
    <property type="component" value="Chromosome"/>
</dbReference>
<dbReference type="GO" id="GO:0005886">
    <property type="term" value="C:plasma membrane"/>
    <property type="evidence" value="ECO:0007669"/>
    <property type="project" value="UniProtKB-SubCell"/>
</dbReference>
<dbReference type="InterPro" id="IPR050051">
    <property type="entry name" value="EccE_dom"/>
</dbReference>
<dbReference type="InterPro" id="IPR021368">
    <property type="entry name" value="T7SS_EccE"/>
</dbReference>
<dbReference type="NCBIfam" id="TIGR03923">
    <property type="entry name" value="T7SS_EccE"/>
    <property type="match status" value="1"/>
</dbReference>
<dbReference type="Pfam" id="PF11203">
    <property type="entry name" value="EccE"/>
    <property type="match status" value="1"/>
</dbReference>
<comment type="function">
    <text evidence="2">Part of the ESX-3 specialized secretion system, which is important for iron and zinc uptake or homeostasis.</text>
</comment>
<comment type="subunit">
    <text evidence="1">Part of the ESX-3 / type VII secretion system (T7SS), which is composed of cytosolic and membrane components. The ESX-3 membrane complex is composed of EccB3, EccC3, EccD3 and EccE3.</text>
</comment>
<comment type="subcellular location">
    <subcellularLocation>
        <location evidence="1">Cell inner membrane</location>
        <topology evidence="3">Multi-pass membrane protein</topology>
    </subcellularLocation>
</comment>
<comment type="similarity">
    <text evidence="4">Belongs to the EccE family.</text>
</comment>
<organism>
    <name type="scientific">Mycobacterium tuberculosis (strain CDC 1551 / Oshkosh)</name>
    <dbReference type="NCBI Taxonomy" id="83331"/>
    <lineage>
        <taxon>Bacteria</taxon>
        <taxon>Bacillati</taxon>
        <taxon>Actinomycetota</taxon>
        <taxon>Actinomycetes</taxon>
        <taxon>Mycobacteriales</taxon>
        <taxon>Mycobacteriaceae</taxon>
        <taxon>Mycobacterium</taxon>
        <taxon>Mycobacterium tuberculosis complex</taxon>
    </lineage>
</organism>
<gene>
    <name evidence="2" type="primary">eccE3</name>
    <name type="ordered locus">MT0305</name>
</gene>
<protein>
    <recommendedName>
        <fullName evidence="2">ESX-3 secretion system protein EccE3</fullName>
    </recommendedName>
    <alternativeName>
        <fullName evidence="2">ESX conserved component E3</fullName>
    </alternativeName>
    <alternativeName>
        <fullName evidence="2">Type VII secretion system protein EccE3</fullName>
        <shortName evidence="2">T7SS protein EccE3</shortName>
    </alternativeName>
</protein>
<reference key="1">
    <citation type="journal article" date="2002" name="J. Bacteriol.">
        <title>Whole-genome comparison of Mycobacterium tuberculosis clinical and laboratory strains.</title>
        <authorList>
            <person name="Fleischmann R.D."/>
            <person name="Alland D."/>
            <person name="Eisen J.A."/>
            <person name="Carpenter L."/>
            <person name="White O."/>
            <person name="Peterson J.D."/>
            <person name="DeBoy R.T."/>
            <person name="Dodson R.J."/>
            <person name="Gwinn M.L."/>
            <person name="Haft D.H."/>
            <person name="Hickey E.K."/>
            <person name="Kolonay J.F."/>
            <person name="Nelson W.C."/>
            <person name="Umayam L.A."/>
            <person name="Ermolaeva M.D."/>
            <person name="Salzberg S.L."/>
            <person name="Delcher A."/>
            <person name="Utterback T.R."/>
            <person name="Weidman J.F."/>
            <person name="Khouri H.M."/>
            <person name="Gill J."/>
            <person name="Mikula A."/>
            <person name="Bishai W."/>
            <person name="Jacobs W.R. Jr."/>
            <person name="Venter J.C."/>
            <person name="Fraser C.M."/>
        </authorList>
    </citation>
    <scope>NUCLEOTIDE SEQUENCE [LARGE SCALE GENOMIC DNA]</scope>
    <source>
        <strain>CDC 1551 / Oshkosh</strain>
    </source>
</reference>
<accession>P9WJE4</accession>
<accession>L0T688</accession>
<accession>O53696</accession>
<accession>Q7DA30</accession>
<proteinExistence type="inferred from homology"/>